<comment type="function">
    <text evidence="6">Component of the large ribosomal subunit (PubMed:30517857). The ribosome is a large ribonucleoprotein complex responsible for the synthesis of proteins in the cell (PubMed:30517857).</text>
</comment>
<comment type="subunit">
    <text evidence="3 4 5 6 7 8 9 10 11">Component of the large ribosomal subunit.</text>
</comment>
<comment type="subcellular location">
    <subcellularLocation>
        <location evidence="3 4 5 6 7 8 9 10 11">Cytoplasm</location>
    </subcellularLocation>
</comment>
<comment type="similarity">
    <text evidence="12">Belongs to the universal ribosomal protein uL1 family.</text>
</comment>
<dbReference type="EMBL" id="AAGW02017812">
    <property type="status" value="NOT_ANNOTATED_CDS"/>
    <property type="molecule type" value="Genomic_DNA"/>
</dbReference>
<dbReference type="EMBL" id="AAGW02017813">
    <property type="status" value="NOT_ANNOTATED_CDS"/>
    <property type="molecule type" value="Genomic_DNA"/>
</dbReference>
<dbReference type="PDB" id="6D90">
    <property type="method" value="EM"/>
    <property type="resolution" value="3.20 A"/>
    <property type="chains" value="K=1-217"/>
</dbReference>
<dbReference type="PDB" id="6D9J">
    <property type="method" value="EM"/>
    <property type="resolution" value="3.20 A"/>
    <property type="chains" value="K=1-217"/>
</dbReference>
<dbReference type="PDB" id="6GZ3">
    <property type="method" value="EM"/>
    <property type="resolution" value="3.60 A"/>
    <property type="chains" value="Au=1-217"/>
</dbReference>
<dbReference type="PDB" id="6HCF">
    <property type="method" value="EM"/>
    <property type="resolution" value="3.90 A"/>
    <property type="chains" value="u3=1-217"/>
</dbReference>
<dbReference type="PDB" id="6HCJ">
    <property type="method" value="EM"/>
    <property type="resolution" value="3.80 A"/>
    <property type="chains" value="w3=1-217"/>
</dbReference>
<dbReference type="PDB" id="6HCM">
    <property type="method" value="EM"/>
    <property type="resolution" value="6.80 A"/>
    <property type="chains" value="u3=1-217"/>
</dbReference>
<dbReference type="PDB" id="6HCQ">
    <property type="method" value="EM"/>
    <property type="resolution" value="6.50 A"/>
    <property type="chains" value="w3=1-217"/>
</dbReference>
<dbReference type="PDB" id="6MTB">
    <property type="method" value="EM"/>
    <property type="resolution" value="3.60 A"/>
    <property type="chains" value="u=5-210"/>
</dbReference>
<dbReference type="PDB" id="6MTC">
    <property type="method" value="EM"/>
    <property type="resolution" value="3.40 A"/>
    <property type="chains" value="u=5-210"/>
</dbReference>
<dbReference type="PDB" id="6MTD">
    <property type="method" value="EM"/>
    <property type="resolution" value="3.30 A"/>
    <property type="chains" value="u=5-210"/>
</dbReference>
<dbReference type="PDB" id="6P5I">
    <property type="method" value="EM"/>
    <property type="resolution" value="3.10 A"/>
    <property type="chains" value="AK=1-217"/>
</dbReference>
<dbReference type="PDB" id="6P5J">
    <property type="method" value="EM"/>
    <property type="resolution" value="3.10 A"/>
    <property type="chains" value="AK=1-217"/>
</dbReference>
<dbReference type="PDB" id="6P5K">
    <property type="method" value="EM"/>
    <property type="resolution" value="3.10 A"/>
    <property type="chains" value="AK=1-217"/>
</dbReference>
<dbReference type="PDB" id="6P5N">
    <property type="method" value="EM"/>
    <property type="resolution" value="3.20 A"/>
    <property type="chains" value="AK=1-217"/>
</dbReference>
<dbReference type="PDB" id="6SGC">
    <property type="method" value="EM"/>
    <property type="resolution" value="2.80 A"/>
    <property type="chains" value="B=1-217"/>
</dbReference>
<dbReference type="PDB" id="6ZVK">
    <property type="method" value="EM"/>
    <property type="resolution" value="3.49 A"/>
    <property type="chains" value="42=1-217"/>
</dbReference>
<dbReference type="PDB" id="7A01">
    <property type="method" value="EM"/>
    <property type="resolution" value="3.60 A"/>
    <property type="chains" value="42=1-217"/>
</dbReference>
<dbReference type="PDB" id="7NWG">
    <property type="method" value="EM"/>
    <property type="resolution" value="3.80 A"/>
    <property type="chains" value="w3=1-217"/>
</dbReference>
<dbReference type="PDB" id="7O7Y">
    <property type="method" value="EM"/>
    <property type="resolution" value="2.20 A"/>
    <property type="chains" value="Bv=1-217"/>
</dbReference>
<dbReference type="PDB" id="7O7Z">
    <property type="method" value="EM"/>
    <property type="resolution" value="2.40 A"/>
    <property type="chains" value="Bv=1-217"/>
</dbReference>
<dbReference type="PDB" id="7O80">
    <property type="method" value="EM"/>
    <property type="resolution" value="2.90 A"/>
    <property type="chains" value="Bv=1-217"/>
</dbReference>
<dbReference type="PDB" id="7O81">
    <property type="method" value="EM"/>
    <property type="resolution" value="3.10 A"/>
    <property type="chains" value="Bv=1-217"/>
</dbReference>
<dbReference type="PDB" id="7OYD">
    <property type="method" value="EM"/>
    <property type="resolution" value="2.30 A"/>
    <property type="chains" value="x=1-217"/>
</dbReference>
<dbReference type="PDB" id="7ZJW">
    <property type="method" value="EM"/>
    <property type="resolution" value="2.80 A"/>
    <property type="chains" value="Lx=1-217"/>
</dbReference>
<dbReference type="PDB" id="7ZJX">
    <property type="method" value="EM"/>
    <property type="resolution" value="3.10 A"/>
    <property type="chains" value="Lx=1-217"/>
</dbReference>
<dbReference type="PDB" id="8BTK">
    <property type="method" value="EM"/>
    <property type="resolution" value="3.50 A"/>
    <property type="chains" value="Bv=1-217"/>
</dbReference>
<dbReference type="PDB" id="8P2K">
    <property type="method" value="EM"/>
    <property type="resolution" value="2.90 A"/>
    <property type="chains" value="Bv=1-217"/>
</dbReference>
<dbReference type="PDBsum" id="6D90"/>
<dbReference type="PDBsum" id="6D9J"/>
<dbReference type="PDBsum" id="6GZ3"/>
<dbReference type="PDBsum" id="6HCF"/>
<dbReference type="PDBsum" id="6HCJ"/>
<dbReference type="PDBsum" id="6HCM"/>
<dbReference type="PDBsum" id="6HCQ"/>
<dbReference type="PDBsum" id="6MTB"/>
<dbReference type="PDBsum" id="6MTC"/>
<dbReference type="PDBsum" id="6MTD"/>
<dbReference type="PDBsum" id="6P5I"/>
<dbReference type="PDBsum" id="6P5J"/>
<dbReference type="PDBsum" id="6P5K"/>
<dbReference type="PDBsum" id="6P5N"/>
<dbReference type="PDBsum" id="6SGC"/>
<dbReference type="PDBsum" id="6ZVK"/>
<dbReference type="PDBsum" id="7A01"/>
<dbReference type="PDBsum" id="7NWG"/>
<dbReference type="PDBsum" id="7O7Y"/>
<dbReference type="PDBsum" id="7O7Z"/>
<dbReference type="PDBsum" id="7O80"/>
<dbReference type="PDBsum" id="7O81"/>
<dbReference type="PDBsum" id="7OYD"/>
<dbReference type="PDBsum" id="7ZJW"/>
<dbReference type="PDBsum" id="7ZJX"/>
<dbReference type="PDBsum" id="8BTK"/>
<dbReference type="PDBsum" id="8P2K"/>
<dbReference type="EMDB" id="EMD-0099"/>
<dbReference type="EMDB" id="EMD-0100"/>
<dbReference type="EMDB" id="EMD-0192"/>
<dbReference type="EMDB" id="EMD-0194"/>
<dbReference type="EMDB" id="EMD-0195"/>
<dbReference type="EMDB" id="EMD-0197"/>
<dbReference type="EMDB" id="EMD-11459"/>
<dbReference type="EMDB" id="EMD-11590"/>
<dbReference type="EMDB" id="EMD-12631"/>
<dbReference type="EMDB" id="EMD-12756"/>
<dbReference type="EMDB" id="EMD-12757"/>
<dbReference type="EMDB" id="EMD-12758"/>
<dbReference type="EMDB" id="EMD-12759"/>
<dbReference type="EMDB" id="EMD-13114"/>
<dbReference type="EMDB" id="EMD-14751"/>
<dbReference type="EMDB" id="EMD-14752"/>
<dbReference type="EMDB" id="EMD-16232"/>
<dbReference type="EMDB" id="EMD-17367"/>
<dbReference type="EMDB" id="EMD-20255"/>
<dbReference type="EMDB" id="EMD-20256"/>
<dbReference type="EMDB" id="EMD-20257"/>
<dbReference type="EMDB" id="EMD-20258"/>
<dbReference type="EMDB" id="EMD-7834"/>
<dbReference type="EMDB" id="EMD-7836"/>
<dbReference type="EMDB" id="EMD-9237"/>
<dbReference type="EMDB" id="EMD-9239"/>
<dbReference type="EMDB" id="EMD-9240"/>
<dbReference type="SMR" id="G1SKZ8"/>
<dbReference type="IntAct" id="G1SKZ8">
    <property type="interactions" value="1"/>
</dbReference>
<dbReference type="PaxDb" id="9986-ENSOCUP00000003518"/>
<dbReference type="Ensembl" id="ENSOCUT00000004064.4">
    <property type="protein sequence ID" value="ENSOCUP00000003518.4"/>
    <property type="gene ID" value="ENSOCUG00000004065.4"/>
</dbReference>
<dbReference type="eggNOG" id="KOG1570">
    <property type="taxonomic scope" value="Eukaryota"/>
</dbReference>
<dbReference type="GeneTree" id="ENSGT00390000008767"/>
<dbReference type="HOGENOM" id="CLU_062853_3_0_1"/>
<dbReference type="TreeFam" id="TF300791"/>
<dbReference type="Proteomes" id="UP000001811">
    <property type="component" value="Chromosome 12"/>
</dbReference>
<dbReference type="Bgee" id="ENSOCUG00000004065">
    <property type="expression patterns" value="Expressed in embryo and 15 other cell types or tissues"/>
</dbReference>
<dbReference type="GO" id="GO:0005737">
    <property type="term" value="C:cytoplasm"/>
    <property type="evidence" value="ECO:0007669"/>
    <property type="project" value="UniProtKB-SubCell"/>
</dbReference>
<dbReference type="GO" id="GO:0015934">
    <property type="term" value="C:large ribosomal subunit"/>
    <property type="evidence" value="ECO:0007669"/>
    <property type="project" value="InterPro"/>
</dbReference>
<dbReference type="GO" id="GO:0003723">
    <property type="term" value="F:RNA binding"/>
    <property type="evidence" value="ECO:0007669"/>
    <property type="project" value="InterPro"/>
</dbReference>
<dbReference type="GO" id="GO:0003735">
    <property type="term" value="F:structural constituent of ribosome"/>
    <property type="evidence" value="ECO:0007669"/>
    <property type="project" value="InterPro"/>
</dbReference>
<dbReference type="GO" id="GO:0006412">
    <property type="term" value="P:translation"/>
    <property type="evidence" value="ECO:0007669"/>
    <property type="project" value="InterPro"/>
</dbReference>
<dbReference type="CDD" id="cd00403">
    <property type="entry name" value="Ribosomal_L1"/>
    <property type="match status" value="1"/>
</dbReference>
<dbReference type="FunFam" id="3.30.190.20:FF:000006">
    <property type="entry name" value="Ribosomal protein"/>
    <property type="match status" value="1"/>
</dbReference>
<dbReference type="FunFam" id="3.40.50.790:FF:000002">
    <property type="entry name" value="Ribosomal protein"/>
    <property type="match status" value="1"/>
</dbReference>
<dbReference type="FunFam" id="3.30.190.20:FF:000009">
    <property type="entry name" value="Ribosomal protein L10a"/>
    <property type="match status" value="1"/>
</dbReference>
<dbReference type="Gene3D" id="3.30.190.20">
    <property type="match status" value="1"/>
</dbReference>
<dbReference type="Gene3D" id="3.40.50.790">
    <property type="match status" value="1"/>
</dbReference>
<dbReference type="InterPro" id="IPR050257">
    <property type="entry name" value="eL8/uL1-like"/>
</dbReference>
<dbReference type="InterPro" id="IPR002143">
    <property type="entry name" value="Ribosomal_uL1"/>
</dbReference>
<dbReference type="InterPro" id="IPR023674">
    <property type="entry name" value="Ribosomal_uL1-like"/>
</dbReference>
<dbReference type="InterPro" id="IPR028364">
    <property type="entry name" value="Ribosomal_uL1/biogenesis"/>
</dbReference>
<dbReference type="InterPro" id="IPR016095">
    <property type="entry name" value="Ribosomal_uL1_3-a/b-sand"/>
</dbReference>
<dbReference type="InterPro" id="IPR023673">
    <property type="entry name" value="Ribosomal_uL1_CS"/>
</dbReference>
<dbReference type="PANTHER" id="PTHR23105">
    <property type="entry name" value="RIBOSOMAL PROTEIN L7AE FAMILY MEMBER"/>
    <property type="match status" value="1"/>
</dbReference>
<dbReference type="Pfam" id="PF00687">
    <property type="entry name" value="Ribosomal_L1"/>
    <property type="match status" value="1"/>
</dbReference>
<dbReference type="PIRSF" id="PIRSF002155">
    <property type="entry name" value="Ribosomal_L1"/>
    <property type="match status" value="1"/>
</dbReference>
<dbReference type="SUPFAM" id="SSF56808">
    <property type="entry name" value="Ribosomal protein L1"/>
    <property type="match status" value="1"/>
</dbReference>
<dbReference type="PROSITE" id="PS01199">
    <property type="entry name" value="RIBOSOMAL_L1"/>
    <property type="match status" value="1"/>
</dbReference>
<gene>
    <name type="primary">RPL10A</name>
</gene>
<feature type="chain" id="PRO_0000460098" description="Large ribosomal subunit protein uL1">
    <location>
        <begin position="1"/>
        <end position="217"/>
    </location>
</feature>
<feature type="modified residue" description="Phosphotyrosine" evidence="1">
    <location>
        <position position="11"/>
    </location>
</feature>
<feature type="modified residue" description="N6-acetyllysine" evidence="1">
    <location>
        <position position="91"/>
    </location>
</feature>
<feature type="modified residue" description="N6-acetyllysine" evidence="2">
    <location>
        <position position="106"/>
    </location>
</feature>
<feature type="modified residue" description="N6-acetyllysine; alternate" evidence="2">
    <location>
        <position position="118"/>
    </location>
</feature>
<feature type="cross-link" description="Glycyl lysine isopeptide (Lys-Gly) (interchain with G-Cter in SUMO1); alternate" evidence="2">
    <location>
        <position position="118"/>
    </location>
</feature>
<feature type="cross-link" description="Glycyl lysine isopeptide (Lys-Gly) (interchain with G-Cter in SUMO2); alternate" evidence="2">
    <location>
        <position position="118"/>
    </location>
</feature>
<feature type="cross-link" description="Glycyl lysine isopeptide (Lys-Gly) (interchain with G-Cter in SUMO2)" evidence="2">
    <location>
        <position position="161"/>
    </location>
</feature>
<accession>G1SKZ8</accession>
<proteinExistence type="evidence at protein level"/>
<evidence type="ECO:0000250" key="1">
    <source>
        <dbReference type="UniProtKB" id="P53026"/>
    </source>
</evidence>
<evidence type="ECO:0000250" key="2">
    <source>
        <dbReference type="UniProtKB" id="P62906"/>
    </source>
</evidence>
<evidence type="ECO:0000269" key="3">
    <source>
    </source>
</evidence>
<evidence type="ECO:0000269" key="4">
    <source>
    </source>
</evidence>
<evidence type="ECO:0000269" key="5">
    <source>
    </source>
</evidence>
<evidence type="ECO:0000269" key="6">
    <source>
    </source>
</evidence>
<evidence type="ECO:0000269" key="7">
    <source>
    </source>
</evidence>
<evidence type="ECO:0000269" key="8">
    <source>
    </source>
</evidence>
<evidence type="ECO:0000269" key="9">
    <source>
    </source>
</evidence>
<evidence type="ECO:0000269" key="10">
    <source>
    </source>
</evidence>
<evidence type="ECO:0000269" key="11">
    <source>
    </source>
</evidence>
<evidence type="ECO:0000305" key="12"/>
<evidence type="ECO:0007744" key="13">
    <source>
        <dbReference type="PDB" id="6D90"/>
    </source>
</evidence>
<evidence type="ECO:0007744" key="14">
    <source>
        <dbReference type="PDB" id="6D9J"/>
    </source>
</evidence>
<evidence type="ECO:0007744" key="15">
    <source>
        <dbReference type="PDB" id="6GZ3"/>
    </source>
</evidence>
<evidence type="ECO:0007744" key="16">
    <source>
        <dbReference type="PDB" id="6HCF"/>
    </source>
</evidence>
<evidence type="ECO:0007744" key="17">
    <source>
        <dbReference type="PDB" id="6HCJ"/>
    </source>
</evidence>
<evidence type="ECO:0007744" key="18">
    <source>
        <dbReference type="PDB" id="6MTB"/>
    </source>
</evidence>
<evidence type="ECO:0007744" key="19">
    <source>
        <dbReference type="PDB" id="6MTC"/>
    </source>
</evidence>
<evidence type="ECO:0007744" key="20">
    <source>
        <dbReference type="PDB" id="6P5I"/>
    </source>
</evidence>
<evidence type="ECO:0007744" key="21">
    <source>
        <dbReference type="PDB" id="6P5J"/>
    </source>
</evidence>
<evidence type="ECO:0007744" key="22">
    <source>
        <dbReference type="PDB" id="6SGC"/>
    </source>
</evidence>
<evidence type="ECO:0007744" key="23">
    <source>
        <dbReference type="PDB" id="6ZVK"/>
    </source>
</evidence>
<evidence type="ECO:0007744" key="24">
    <source>
        <dbReference type="PDB" id="7A01"/>
    </source>
</evidence>
<evidence type="ECO:0007744" key="25">
    <source>
        <dbReference type="PDB" id="7OYD"/>
    </source>
</evidence>
<evidence type="ECO:0007744" key="26">
    <source>
        <dbReference type="PDB" id="7ZJW"/>
    </source>
</evidence>
<evidence type="ECO:0007744" key="27">
    <source>
        <dbReference type="PDB" id="7ZJX"/>
    </source>
</evidence>
<reference key="1">
    <citation type="journal article" date="2011" name="Nature">
        <title>A high-resolution map of human evolutionary constraint using 29 mammals.</title>
        <authorList>
            <person name="Lindblad-Toh K."/>
            <person name="Garber M."/>
            <person name="Zuk O."/>
            <person name="Lin M.F."/>
            <person name="Parker B.J."/>
            <person name="Washietl S."/>
            <person name="Kheradpour P."/>
            <person name="Ernst J."/>
            <person name="Jordan G."/>
            <person name="Mauceli E."/>
            <person name="Ward L.D."/>
            <person name="Lowe C.B."/>
            <person name="Holloway A.K."/>
            <person name="Clamp M."/>
            <person name="Gnerre S."/>
            <person name="Alfoldi J."/>
            <person name="Beal K."/>
            <person name="Chang J."/>
            <person name="Clawson H."/>
            <person name="Cuff J."/>
            <person name="Di Palma F."/>
            <person name="Fitzgerald S."/>
            <person name="Flicek P."/>
            <person name="Guttman M."/>
            <person name="Hubisz M.J."/>
            <person name="Jaffe D.B."/>
            <person name="Jungreis I."/>
            <person name="Kent W.J."/>
            <person name="Kostka D."/>
            <person name="Lara M."/>
            <person name="Martins A.L."/>
            <person name="Massingham T."/>
            <person name="Moltke I."/>
            <person name="Raney B.J."/>
            <person name="Rasmussen M.D."/>
            <person name="Robinson J."/>
            <person name="Stark A."/>
            <person name="Vilella A.J."/>
            <person name="Wen J."/>
            <person name="Xie X."/>
            <person name="Zody M.C."/>
            <person name="Baldwin J."/>
            <person name="Bloom T."/>
            <person name="Chin C.W."/>
            <person name="Heiman D."/>
            <person name="Nicol R."/>
            <person name="Nusbaum C."/>
            <person name="Young S."/>
            <person name="Wilkinson J."/>
            <person name="Worley K.C."/>
            <person name="Kovar C.L."/>
            <person name="Muzny D.M."/>
            <person name="Gibbs R.A."/>
            <person name="Cree A."/>
            <person name="Dihn H.H."/>
            <person name="Fowler G."/>
            <person name="Jhangiani S."/>
            <person name="Joshi V."/>
            <person name="Lee S."/>
            <person name="Lewis L.R."/>
            <person name="Nazareth L.V."/>
            <person name="Okwuonu G."/>
            <person name="Santibanez J."/>
            <person name="Warren W.C."/>
            <person name="Mardis E.R."/>
            <person name="Weinstock G.M."/>
            <person name="Wilson R.K."/>
            <person name="Delehaunty K."/>
            <person name="Dooling D."/>
            <person name="Fronik C."/>
            <person name="Fulton L."/>
            <person name="Fulton B."/>
            <person name="Graves T."/>
            <person name="Minx P."/>
            <person name="Sodergren E."/>
            <person name="Birney E."/>
            <person name="Margulies E.H."/>
            <person name="Herrero J."/>
            <person name="Green E.D."/>
            <person name="Haussler D."/>
            <person name="Siepel A."/>
            <person name="Goldman N."/>
            <person name="Pollard K.S."/>
            <person name="Pedersen J.S."/>
            <person name="Lander E.S."/>
            <person name="Kellis M."/>
        </authorList>
    </citation>
    <scope>NUCLEOTIDE SEQUENCE [LARGE SCALE GENOMIC DNA]</scope>
    <source>
        <strain>Thorbecke</strain>
    </source>
</reference>
<reference evidence="15" key="2">
    <citation type="journal article" date="2018" name="Cell Rep.">
        <title>tRNA translocation by the eukaryotic 80S ribosome and the impact of GTP hydrolysis.</title>
        <authorList>
            <person name="Flis J."/>
            <person name="Holm M."/>
            <person name="Rundlet E.J."/>
            <person name="Loerke J."/>
            <person name="Hilal T."/>
            <person name="Dabrowski M."/>
            <person name="Burger J."/>
            <person name="Mielke T."/>
            <person name="Blanchard S.C."/>
            <person name="Spahn C.M.T."/>
            <person name="Budkevich T.V."/>
        </authorList>
    </citation>
    <scope>STRUCTURE BY ELECTRON MICROSCOPY (3.60 ANGSTROMS) OF RIBOSOME</scope>
    <scope>FUNCTION</scope>
    <scope>SUBCELLULAR LOCATION</scope>
    <scope>SUBUNIT</scope>
</reference>
<reference evidence="13 14" key="3">
    <citation type="journal article" date="2018" name="Elife">
        <title>Dual tRNA mimicry in the Cricket paralysis virus IRES uncovers an unexpected similarity with the Hepatitis C Virus IRES.</title>
        <authorList>
            <person name="Pisareva V.P."/>
            <person name="Pisarev A.V."/>
            <person name="Fernandez I.S."/>
        </authorList>
    </citation>
    <scope>STRUCTURE BY ELECTRON MICROSCOPY (3.20 ANGSTROMS) OF RIBOSOME</scope>
    <scope>SUBCELLULAR LOCATION</scope>
    <scope>SUBUNIT</scope>
</reference>
<reference evidence="18 19" key="4">
    <citation type="journal article" date="2018" name="Elife">
        <title>Structures of translationally inactive mammalian ribosomes.</title>
        <authorList>
            <person name="Brown A."/>
            <person name="Baird M.R."/>
            <person name="Yip M.C."/>
            <person name="Murray J."/>
            <person name="Shao S."/>
        </authorList>
    </citation>
    <scope>STRUCTURE BY ELECTRON MICROSCOPY (3.30 ANGSTROMS) OF 5-210 OF RIBOSOME</scope>
    <scope>SUBCELLULAR LOCATION</scope>
    <scope>SUBUNIT</scope>
</reference>
<reference evidence="16 17" key="5">
    <citation type="journal article" date="2018" name="Mol. Cell">
        <title>ZNF598 is a quality control sensor of collided ribosomes.</title>
        <authorList>
            <person name="Juszkiewicz S."/>
            <person name="Chandrasekaran V."/>
            <person name="Lin Z."/>
            <person name="Kraatz S."/>
            <person name="Ramakrishnan V."/>
            <person name="Hegde R.S."/>
        </authorList>
    </citation>
    <scope>STRUCTURE BY ELECTRON MICROSCOPY (3.80 ANGSTROMS) OF RIBOSOME</scope>
    <scope>SUBCELLULAR LOCATION</scope>
    <scope>SUBUNIT</scope>
</reference>
<reference evidence="20 21" key="6">
    <citation type="journal article" date="2019" name="EMBO J.">
        <title>The Israeli acute paralysis virus IRES captures host ribosomes by mimicking a ribosomal state with hybrid tRNAs.</title>
        <authorList>
            <person name="Acosta-Reyes F."/>
            <person name="Neupane R."/>
            <person name="Frank J."/>
            <person name="Fernandez I.S."/>
        </authorList>
    </citation>
    <scope>STRUCTURE BY ELECTRON MICROSCOPY (3.10 ANGSTROMS) OF RIBOSOME</scope>
    <scope>SUBCELLULAR LOCATION</scope>
    <scope>SUBUNIT</scope>
</reference>
<reference evidence="22" key="7">
    <citation type="journal article" date="2019" name="Nat. Struct. Mol. Biol.">
        <title>Mechanism of ribosome stalling during translation of a poly(A) tail.</title>
        <authorList>
            <person name="Chandrasekaran V."/>
            <person name="Juszkiewicz S."/>
            <person name="Choi J."/>
            <person name="Puglisi J.D."/>
            <person name="Brown A."/>
            <person name="Shao S."/>
            <person name="Ramakrishnan V."/>
            <person name="Hegde R.S."/>
        </authorList>
    </citation>
    <scope>STRUCTURE BY ELECTRON MICROSCOPY (2.80 ANGSTROMS) OF RIBOSOME</scope>
    <scope>SUBCELLULAR LOCATION</scope>
    <scope>SUBUNIT</scope>
</reference>
<reference evidence="23 24" key="8">
    <citation type="journal article" date="2020" name="Cell Rep.">
        <title>The Halastavi arva virus intergenic region IRES promotes translation by the simplest possible initiation mechanism.</title>
        <authorList>
            <person name="Abaeva I.S."/>
            <person name="Vicens Q."/>
            <person name="Bochler A."/>
            <person name="Soufari H."/>
            <person name="Simonetti A."/>
            <person name="Pestova T.V."/>
            <person name="Hashem Y."/>
            <person name="Hellen C.U.T."/>
        </authorList>
    </citation>
    <scope>STRUCTURE BY ELECTRON MICROSCOPY (3.49 ANGSTROMS) OF 32-172 OF RIBOSOME</scope>
    <scope>SUBCELLULAR LOCATION</scope>
    <scope>SUBUNIT</scope>
</reference>
<reference evidence="26 27" key="9">
    <citation type="journal article" date="2022" name="Science">
        <title>Structure of the mammalian ribosome as it decodes the selenocysteine UGA codon.</title>
        <authorList>
            <person name="Hilal T."/>
            <person name="Killam B.Y."/>
            <person name="Grozdanovic M."/>
            <person name="Dobosz-Bartoszek M."/>
            <person name="Loerke J."/>
            <person name="Buerger J."/>
            <person name="Mielke T."/>
            <person name="Copeland P.R."/>
            <person name="Simonovic M."/>
            <person name="Spahn C.M.T."/>
        </authorList>
    </citation>
    <scope>STRUCTURE BY ELECTRON MICROSCOPY (2.80 ANGSTROMS) OF RIBOSOME</scope>
    <scope>SUBCELLULAR LOCATION</scope>
    <scope>SUBUNIT</scope>
</reference>
<reference evidence="25" key="10">
    <citation type="journal article" date="2023" name="Nature">
        <title>A molecular network of conserved factors keeps ribosomes dormant in the egg.</title>
        <authorList>
            <person name="Leesch F."/>
            <person name="Lorenzo-Orts L."/>
            <person name="Pribitzer C."/>
            <person name="Grishkovskaya I."/>
            <person name="Roehsner J."/>
            <person name="Chugunova A."/>
            <person name="Matzinger M."/>
            <person name="Roitinger E."/>
            <person name="Belacic K."/>
            <person name="Kandolf S."/>
            <person name="Lin T.Y."/>
            <person name="Mechtler K."/>
            <person name="Meinhart A."/>
            <person name="Haselbach D."/>
            <person name="Pauli A."/>
        </authorList>
    </citation>
    <scope>STRUCTURE BY ELECTRON MICROSCOPY (2.30 ANGSTROMS) OF RIBOSOME</scope>
    <scope>SUBCELLULAR LOCATION</scope>
    <scope>SUBUNIT</scope>
</reference>
<organism>
    <name type="scientific">Oryctolagus cuniculus</name>
    <name type="common">Rabbit</name>
    <dbReference type="NCBI Taxonomy" id="9986"/>
    <lineage>
        <taxon>Eukaryota</taxon>
        <taxon>Metazoa</taxon>
        <taxon>Chordata</taxon>
        <taxon>Craniata</taxon>
        <taxon>Vertebrata</taxon>
        <taxon>Euteleostomi</taxon>
        <taxon>Mammalia</taxon>
        <taxon>Eutheria</taxon>
        <taxon>Euarchontoglires</taxon>
        <taxon>Glires</taxon>
        <taxon>Lagomorpha</taxon>
        <taxon>Leporidae</taxon>
        <taxon>Oryctolagus</taxon>
    </lineage>
</organism>
<keyword id="KW-0002">3D-structure</keyword>
<keyword id="KW-0007">Acetylation</keyword>
<keyword id="KW-0963">Cytoplasm</keyword>
<keyword id="KW-1017">Isopeptide bond</keyword>
<keyword id="KW-0597">Phosphoprotein</keyword>
<keyword id="KW-1185">Reference proteome</keyword>
<keyword id="KW-0687">Ribonucleoprotein</keyword>
<keyword id="KW-0689">Ribosomal protein</keyword>
<keyword id="KW-0832">Ubl conjugation</keyword>
<protein>
    <recommendedName>
        <fullName>Large ribosomal subunit protein uL1</fullName>
    </recommendedName>
    <alternativeName>
        <fullName>60S ribosomal protein L10a</fullName>
    </alternativeName>
</protein>
<name>RL10A_RABIT</name>
<sequence length="217" mass="24828">MGDILSRDTLYEAVREVLHGNQRKRRKFLETVELQISLKNYDPQKDKRFSGTVRLKSTPRPKFSVCVLGDQQHCDEAKAVDIPHMDIEALKKLNKNKKLVKKLAKKYDAFLASESLIKQIPRILGPGLNKAGKFPSLLTHNENMVAKVDEVKSTIKFQMKKVLCLAVAVGHVKMTDDELVYNIHLAVNFLVSLLKKNWQNVRALYIKSTMGKPQRLY</sequence>